<protein>
    <recommendedName>
        <fullName evidence="1">3-hydroxyacyl-[acyl-carrier-protein] dehydratase FabZ</fullName>
        <ecNumber evidence="1">4.2.1.59</ecNumber>
    </recommendedName>
    <alternativeName>
        <fullName evidence="1">(3R)-hydroxymyristoyl-[acyl-carrier-protein] dehydratase</fullName>
        <shortName evidence="1">(3R)-hydroxymyristoyl-ACP dehydrase</shortName>
    </alternativeName>
    <alternativeName>
        <fullName evidence="1">Beta-hydroxyacyl-ACP dehydratase</fullName>
    </alternativeName>
</protein>
<comment type="function">
    <text evidence="1">Involved in unsaturated fatty acids biosynthesis. Catalyzes the dehydration of short chain beta-hydroxyacyl-ACPs and long chain saturated and unsaturated beta-hydroxyacyl-ACPs.</text>
</comment>
<comment type="catalytic activity">
    <reaction evidence="1">
        <text>a (3R)-hydroxyacyl-[ACP] = a (2E)-enoyl-[ACP] + H2O</text>
        <dbReference type="Rhea" id="RHEA:13097"/>
        <dbReference type="Rhea" id="RHEA-COMP:9925"/>
        <dbReference type="Rhea" id="RHEA-COMP:9945"/>
        <dbReference type="ChEBI" id="CHEBI:15377"/>
        <dbReference type="ChEBI" id="CHEBI:78784"/>
        <dbReference type="ChEBI" id="CHEBI:78827"/>
        <dbReference type="EC" id="4.2.1.59"/>
    </reaction>
</comment>
<comment type="subcellular location">
    <subcellularLocation>
        <location evidence="1">Cytoplasm</location>
    </subcellularLocation>
</comment>
<comment type="similarity">
    <text evidence="1">Belongs to the thioester dehydratase family. FabZ subfamily.</text>
</comment>
<comment type="sequence caution" evidence="2">
    <conflict type="erroneous initiation">
        <sequence resource="EMBL-CDS" id="AAN67223"/>
    </conflict>
</comment>
<proteinExistence type="inferred from homology"/>
<feature type="chain" id="PRO_0000091714" description="3-hydroxyacyl-[acyl-carrier-protein] dehydratase FabZ">
    <location>
        <begin position="1"/>
        <end position="146"/>
    </location>
</feature>
<feature type="active site" evidence="1">
    <location>
        <position position="49"/>
    </location>
</feature>
<sequence length="146" mass="16583">MMDINEIREYLPHRYPFLLVDRVTDLDFEAQSIRAYKNVSINEPFFNGHFPAHPIMPGVLIIEAMAQAAGILGFKMLDAKPADGTLYYFVGSDKLRFRQPVLPGDQLVLEAKFLSRKSMIWKFECRALVDGKPVCSAEITCAERSL</sequence>
<gene>
    <name evidence="1" type="primary">fabZ</name>
    <name type="ordered locus">PP_1602</name>
</gene>
<name>FABZ_PSEPK</name>
<reference key="1">
    <citation type="journal article" date="2002" name="Environ. Microbiol.">
        <title>Complete genome sequence and comparative analysis of the metabolically versatile Pseudomonas putida KT2440.</title>
        <authorList>
            <person name="Nelson K.E."/>
            <person name="Weinel C."/>
            <person name="Paulsen I.T."/>
            <person name="Dodson R.J."/>
            <person name="Hilbert H."/>
            <person name="Martins dos Santos V.A.P."/>
            <person name="Fouts D.E."/>
            <person name="Gill S.R."/>
            <person name="Pop M."/>
            <person name="Holmes M."/>
            <person name="Brinkac L.M."/>
            <person name="Beanan M.J."/>
            <person name="DeBoy R.T."/>
            <person name="Daugherty S.C."/>
            <person name="Kolonay J.F."/>
            <person name="Madupu R."/>
            <person name="Nelson W.C."/>
            <person name="White O."/>
            <person name="Peterson J.D."/>
            <person name="Khouri H.M."/>
            <person name="Hance I."/>
            <person name="Chris Lee P."/>
            <person name="Holtzapple E.K."/>
            <person name="Scanlan D."/>
            <person name="Tran K."/>
            <person name="Moazzez A."/>
            <person name="Utterback T.R."/>
            <person name="Rizzo M."/>
            <person name="Lee K."/>
            <person name="Kosack D."/>
            <person name="Moestl D."/>
            <person name="Wedler H."/>
            <person name="Lauber J."/>
            <person name="Stjepandic D."/>
            <person name="Hoheisel J."/>
            <person name="Straetz M."/>
            <person name="Heim S."/>
            <person name="Kiewitz C."/>
            <person name="Eisen J.A."/>
            <person name="Timmis K.N."/>
            <person name="Duesterhoeft A."/>
            <person name="Tuemmler B."/>
            <person name="Fraser C.M."/>
        </authorList>
    </citation>
    <scope>NUCLEOTIDE SEQUENCE [LARGE SCALE GENOMIC DNA]</scope>
    <source>
        <strain>ATCC 47054 / DSM 6125 / CFBP 8728 / NCIMB 11950 / KT2440</strain>
    </source>
</reference>
<organism>
    <name type="scientific">Pseudomonas putida (strain ATCC 47054 / DSM 6125 / CFBP 8728 / NCIMB 11950 / KT2440)</name>
    <dbReference type="NCBI Taxonomy" id="160488"/>
    <lineage>
        <taxon>Bacteria</taxon>
        <taxon>Pseudomonadati</taxon>
        <taxon>Pseudomonadota</taxon>
        <taxon>Gammaproteobacteria</taxon>
        <taxon>Pseudomonadales</taxon>
        <taxon>Pseudomonadaceae</taxon>
        <taxon>Pseudomonas</taxon>
    </lineage>
</organism>
<dbReference type="EC" id="4.2.1.59" evidence="1"/>
<dbReference type="EMBL" id="AE015451">
    <property type="protein sequence ID" value="AAN67223.1"/>
    <property type="status" value="ALT_INIT"/>
    <property type="molecule type" value="Genomic_DNA"/>
</dbReference>
<dbReference type="RefSeq" id="NP_743759.1">
    <property type="nucleotide sequence ID" value="NC_002947.4"/>
</dbReference>
<dbReference type="RefSeq" id="WP_003252314.1">
    <property type="nucleotide sequence ID" value="NZ_CP169744.1"/>
</dbReference>
<dbReference type="SMR" id="Q88MG9"/>
<dbReference type="STRING" id="160488.PP_1602"/>
<dbReference type="PaxDb" id="160488-PP_1602"/>
<dbReference type="GeneID" id="93679465"/>
<dbReference type="KEGG" id="ppu:PP_1602"/>
<dbReference type="PATRIC" id="fig|160488.4.peg.1693"/>
<dbReference type="eggNOG" id="COG0764">
    <property type="taxonomic scope" value="Bacteria"/>
</dbReference>
<dbReference type="HOGENOM" id="CLU_078912_1_0_6"/>
<dbReference type="OrthoDB" id="9772788at2"/>
<dbReference type="PhylomeDB" id="Q88MG9"/>
<dbReference type="BioCyc" id="PPUT160488:G1G01-1699-MONOMER"/>
<dbReference type="Proteomes" id="UP000000556">
    <property type="component" value="Chromosome"/>
</dbReference>
<dbReference type="GO" id="GO:0005737">
    <property type="term" value="C:cytoplasm"/>
    <property type="evidence" value="ECO:0007669"/>
    <property type="project" value="UniProtKB-SubCell"/>
</dbReference>
<dbReference type="GO" id="GO:0016020">
    <property type="term" value="C:membrane"/>
    <property type="evidence" value="ECO:0007669"/>
    <property type="project" value="GOC"/>
</dbReference>
<dbReference type="GO" id="GO:0019171">
    <property type="term" value="F:(3R)-hydroxyacyl-[acyl-carrier-protein] dehydratase activity"/>
    <property type="evidence" value="ECO:0007669"/>
    <property type="project" value="UniProtKB-EC"/>
</dbReference>
<dbReference type="GO" id="GO:0006633">
    <property type="term" value="P:fatty acid biosynthetic process"/>
    <property type="evidence" value="ECO:0007669"/>
    <property type="project" value="UniProtKB-UniRule"/>
</dbReference>
<dbReference type="GO" id="GO:0009245">
    <property type="term" value="P:lipid A biosynthetic process"/>
    <property type="evidence" value="ECO:0007669"/>
    <property type="project" value="UniProtKB-UniRule"/>
</dbReference>
<dbReference type="CDD" id="cd01288">
    <property type="entry name" value="FabZ"/>
    <property type="match status" value="1"/>
</dbReference>
<dbReference type="FunFam" id="3.10.129.10:FF:000001">
    <property type="entry name" value="3-hydroxyacyl-[acyl-carrier-protein] dehydratase FabZ"/>
    <property type="match status" value="1"/>
</dbReference>
<dbReference type="Gene3D" id="3.10.129.10">
    <property type="entry name" value="Hotdog Thioesterase"/>
    <property type="match status" value="1"/>
</dbReference>
<dbReference type="HAMAP" id="MF_00406">
    <property type="entry name" value="FabZ"/>
    <property type="match status" value="1"/>
</dbReference>
<dbReference type="InterPro" id="IPR013114">
    <property type="entry name" value="FabA_FabZ"/>
</dbReference>
<dbReference type="InterPro" id="IPR010084">
    <property type="entry name" value="FabZ"/>
</dbReference>
<dbReference type="InterPro" id="IPR029069">
    <property type="entry name" value="HotDog_dom_sf"/>
</dbReference>
<dbReference type="NCBIfam" id="TIGR01750">
    <property type="entry name" value="fabZ"/>
    <property type="match status" value="1"/>
</dbReference>
<dbReference type="NCBIfam" id="NF000582">
    <property type="entry name" value="PRK00006.1"/>
    <property type="match status" value="1"/>
</dbReference>
<dbReference type="PANTHER" id="PTHR30272">
    <property type="entry name" value="3-HYDROXYACYL-[ACYL-CARRIER-PROTEIN] DEHYDRATASE"/>
    <property type="match status" value="1"/>
</dbReference>
<dbReference type="PANTHER" id="PTHR30272:SF1">
    <property type="entry name" value="3-HYDROXYACYL-[ACYL-CARRIER-PROTEIN] DEHYDRATASE"/>
    <property type="match status" value="1"/>
</dbReference>
<dbReference type="Pfam" id="PF07977">
    <property type="entry name" value="FabA"/>
    <property type="match status" value="1"/>
</dbReference>
<dbReference type="SUPFAM" id="SSF54637">
    <property type="entry name" value="Thioesterase/thiol ester dehydrase-isomerase"/>
    <property type="match status" value="1"/>
</dbReference>
<accession>Q88MG9</accession>
<evidence type="ECO:0000255" key="1">
    <source>
        <dbReference type="HAMAP-Rule" id="MF_00406"/>
    </source>
</evidence>
<evidence type="ECO:0000305" key="2"/>
<keyword id="KW-0963">Cytoplasm</keyword>
<keyword id="KW-0441">Lipid A biosynthesis</keyword>
<keyword id="KW-0444">Lipid biosynthesis</keyword>
<keyword id="KW-0443">Lipid metabolism</keyword>
<keyword id="KW-0456">Lyase</keyword>
<keyword id="KW-1185">Reference proteome</keyword>